<sequence>MYHGALAQHLDIAQLVWYAQWLVIWTVVLLYLRREDRREGYPLVEPLGLVKLAPEDGQVYELPYPKTFVLPHGGTVTVPRRRPETRELKLAQTDGFEGAPLQPTGNPLVDAVGPASYAERAEVVDATVDGKAKIVPLRVATDFSIAEGDVDPRGLPVVAADGVEAGTVTDLWVDRSEHYFRYLELSVAGSARTALIPLGFCDVKKDKIVVTSILSEQFANVPRLQSRDQITLREEDKVSAYYAGGLLYATPERAESLL</sequence>
<comment type="function">
    <text>The reaction center is a membrane-bound complex that mediates the initial photochemical event in the electron transfer process of photosynthesis.</text>
</comment>
<comment type="cofactor">
    <cofactor>
        <name>a bacteriochlorophyll</name>
        <dbReference type="ChEBI" id="CHEBI:38201"/>
    </cofactor>
    <text>Binds 4 bacteriochlorophylls per trimer.</text>
</comment>
<comment type="cofactor">
    <cofactor>
        <name>a bacteriopheophytin</name>
        <dbReference type="ChEBI" id="CHEBI:60411"/>
    </cofactor>
    <text>Binds 2 bacteriopheophytins per trimer.</text>
</comment>
<comment type="cofactor">
    <cofactor>
        <name>Fe cation</name>
        <dbReference type="ChEBI" id="CHEBI:24875"/>
    </cofactor>
    <text>Binds 1 Fe cation per trimer.</text>
</comment>
<comment type="cofactor">
    <cofactor>
        <name>Mg(2+)</name>
        <dbReference type="ChEBI" id="CHEBI:18420"/>
    </cofactor>
    <text>Binds 4 Mg(2+) ions per trimer.</text>
</comment>
<comment type="cofactor">
    <cofactor>
        <name>a menaquinone</name>
        <dbReference type="ChEBI" id="CHEBI:16374"/>
    </cofactor>
    <text>Binds 1 menaquinone per trimer.</text>
</comment>
<comment type="cofactor">
    <cofactor>
        <name>a ubiquinone</name>
        <dbReference type="ChEBI" id="CHEBI:16389"/>
    </cofactor>
    <text>Binds 1 ubiquinone per trimer.</text>
</comment>
<comment type="subunit">
    <text>Heterotrimer composed of subunits L, M, and H.</text>
</comment>
<comment type="subcellular location">
    <subcellularLocation>
        <location>Cellular chromatophore membrane</location>
        <topology>Single-pass membrane protein</topology>
    </subcellularLocation>
</comment>
<comment type="similarity">
    <text evidence="3">Belongs to the reaction center PuhA family.</text>
</comment>
<reference key="1">
    <citation type="journal article" date="1985" name="EMBO J.">
        <title>The `heavy' subunit of the photosynthetic reaction centre from Rhodopseudomonas viridis: isolation of the gene, nucleotide and amino acid sequence.</title>
        <authorList>
            <person name="Michel H."/>
            <person name="Weyer K.A."/>
            <person name="Gruenberg H."/>
            <person name="Lottspeich F."/>
        </authorList>
    </citation>
    <scope>NUCLEOTIDE SEQUENCE [GENOMIC DNA]</scope>
    <scope>FORMYLATION AT MET-1</scope>
    <source>
        <strain>ATCC 19567 / DSM 133 / F</strain>
    </source>
</reference>
<reference key="2">
    <citation type="journal article" date="1985" name="Nature">
        <title>Structure of the protein subunits in the photosynthetic reaction centre of Rhodopseudomonas viridis at 3-A resolution.</title>
        <authorList>
            <person name="Deisenhofer J."/>
            <person name="Epp O."/>
            <person name="Miki K."/>
            <person name="Huber R."/>
            <person name="Michel H."/>
        </authorList>
    </citation>
    <scope>X-RAY CRYSTALLOGRAPHY (3 ANGSTROMS)</scope>
</reference>
<reference key="3">
    <citation type="journal article" date="1984" name="J. Mol. Biol.">
        <title>X-ray structure analysis of a membrane protein complex. Electron density map at 3-A resolution and a model of the chromophores of the photosynthetic reaction center from Rhodopseudomonas viridis.</title>
        <authorList>
            <person name="Deisenhofer J."/>
            <person name="Epp O."/>
            <person name="Miki K."/>
            <person name="Huber R."/>
            <person name="Michel H."/>
        </authorList>
    </citation>
    <scope>X-RAY CRYSTALLOGRAPHY (3 ANGSTROMS)</scope>
</reference>
<reference key="4">
    <citation type="journal article" date="1997" name="Structure">
        <title>The coupling of light-induced electron transfer and proton uptake as derived from crystal structures of reaction centres from Rhodopseudomonas viridis modified at the binding site of the secondary quinone, QB.</title>
        <authorList>
            <person name="Lancaster C.R.D."/>
            <person name="Michel H."/>
        </authorList>
    </citation>
    <scope>X-RAY CRYSTALLOGRAPHY (2.45 ANGSTROMS)</scope>
    <source>
        <strain>ATCC 19567 / DSM 133 / F</strain>
    </source>
</reference>
<reference key="5">
    <citation type="journal article" date="1999" name="J. Mol. Biol.">
        <title>Refined crystal structures of reaction centres from Rhodopseudomonas viridis in complexes with the herbicide atrazine and two chiral atrazine derivatives also lead to a new model of the bound carotenoid.</title>
        <authorList>
            <person name="Lancaster C.R.D."/>
            <person name="Michel H."/>
        </authorList>
    </citation>
    <scope>X-RAY CRYSTALLOGRAPHY (2.35 ANGSTROMS)</scope>
    <source>
        <strain>ATCC 19567 / DSM 133 / F</strain>
    </source>
</reference>
<reference key="6">
    <citation type="journal article" date="1989" name="EMBO J.">
        <title>Nobel lecture. The photosynthetic reaction centre from the purple bacterium Rhodopseudomonas viridis.</title>
        <authorList>
            <person name="Deisenhofer J."/>
            <person name="Michel H."/>
        </authorList>
    </citation>
    <scope>TOPOLOGY</scope>
</reference>
<evidence type="ECO:0000269" key="1">
    <source>
    </source>
</evidence>
<evidence type="ECO:0000269" key="2">
    <source>
    </source>
</evidence>
<evidence type="ECO:0000305" key="3"/>
<evidence type="ECO:0007829" key="4">
    <source>
        <dbReference type="PDB" id="1R2C"/>
    </source>
</evidence>
<evidence type="ECO:0007829" key="5">
    <source>
        <dbReference type="PDB" id="2WJN"/>
    </source>
</evidence>
<evidence type="ECO:0007829" key="6">
    <source>
        <dbReference type="PDB" id="2X5U"/>
    </source>
</evidence>
<evidence type="ECO:0007829" key="7">
    <source>
        <dbReference type="PDB" id="2X5V"/>
    </source>
</evidence>
<evidence type="ECO:0007829" key="8">
    <source>
        <dbReference type="PDB" id="3T6D"/>
    </source>
</evidence>
<evidence type="ECO:0007829" key="9">
    <source>
        <dbReference type="PDB" id="3T6E"/>
    </source>
</evidence>
<accession>P06008</accession>
<proteinExistence type="evidence at protein level"/>
<organism>
    <name type="scientific">Blastochloris viridis</name>
    <name type="common">Rhodopseudomonas viridis</name>
    <dbReference type="NCBI Taxonomy" id="1079"/>
    <lineage>
        <taxon>Bacteria</taxon>
        <taxon>Pseudomonadati</taxon>
        <taxon>Pseudomonadota</taxon>
        <taxon>Alphaproteobacteria</taxon>
        <taxon>Hyphomicrobiales</taxon>
        <taxon>Blastochloridaceae</taxon>
        <taxon>Blastochloris</taxon>
    </lineage>
</organism>
<gene>
    <name type="primary">puhA</name>
</gene>
<feature type="chain" id="PRO_0000090396" description="Reaction center protein H chain">
    <location>
        <begin position="1"/>
        <end position="258"/>
    </location>
</feature>
<feature type="topological domain" description="Periplasmic" evidence="2">
    <location>
        <begin position="1"/>
        <end position="11"/>
    </location>
</feature>
<feature type="transmembrane region" description="Helical">
    <location>
        <begin position="12"/>
        <end position="30"/>
    </location>
</feature>
<feature type="topological domain" description="Cytoplasmic" evidence="2">
    <location>
        <begin position="31"/>
        <end position="258"/>
    </location>
</feature>
<feature type="modified residue" description="N-formylmethionine" evidence="1">
    <location>
        <position position="1"/>
    </location>
</feature>
<feature type="strand" evidence="6">
    <location>
        <begin position="2"/>
        <end position="5"/>
    </location>
</feature>
<feature type="helix" evidence="8">
    <location>
        <begin position="7"/>
        <end position="9"/>
    </location>
</feature>
<feature type="helix" evidence="5">
    <location>
        <begin position="12"/>
        <end position="30"/>
    </location>
</feature>
<feature type="helix" evidence="5">
    <location>
        <begin position="32"/>
        <end position="35"/>
    </location>
</feature>
<feature type="strand" evidence="5">
    <location>
        <begin position="38"/>
        <end position="40"/>
    </location>
</feature>
<feature type="strand" evidence="8">
    <location>
        <begin position="46"/>
        <end position="48"/>
    </location>
</feature>
<feature type="strand" evidence="9">
    <location>
        <begin position="51"/>
        <end position="53"/>
    </location>
</feature>
<feature type="helix" evidence="9">
    <location>
        <begin position="56"/>
        <end position="60"/>
    </location>
</feature>
<feature type="strand" evidence="5">
    <location>
        <begin position="66"/>
        <end position="69"/>
    </location>
</feature>
<feature type="strand" evidence="5">
    <location>
        <begin position="75"/>
        <end position="79"/>
    </location>
</feature>
<feature type="strand" evidence="5">
    <location>
        <begin position="90"/>
        <end position="96"/>
    </location>
</feature>
<feature type="strand" evidence="5">
    <location>
        <begin position="101"/>
        <end position="105"/>
    </location>
</feature>
<feature type="helix" evidence="5">
    <location>
        <begin position="107"/>
        <end position="110"/>
    </location>
</feature>
<feature type="helix" evidence="5">
    <location>
        <begin position="113"/>
        <end position="115"/>
    </location>
</feature>
<feature type="strand" evidence="5">
    <location>
        <begin position="122"/>
        <end position="124"/>
    </location>
</feature>
<feature type="strand" evidence="5">
    <location>
        <begin position="130"/>
        <end position="136"/>
    </location>
</feature>
<feature type="turn" evidence="5">
    <location>
        <begin position="137"/>
        <end position="139"/>
    </location>
</feature>
<feature type="strand" evidence="5">
    <location>
        <begin position="156"/>
        <end position="158"/>
    </location>
</feature>
<feature type="strand" evidence="7">
    <location>
        <begin position="160"/>
        <end position="162"/>
    </location>
</feature>
<feature type="strand" evidence="5">
    <location>
        <begin position="164"/>
        <end position="174"/>
    </location>
</feature>
<feature type="turn" evidence="5">
    <location>
        <begin position="175"/>
        <end position="178"/>
    </location>
</feature>
<feature type="strand" evidence="5">
    <location>
        <begin position="179"/>
        <end position="187"/>
    </location>
</feature>
<feature type="turn" evidence="5">
    <location>
        <begin position="188"/>
        <end position="191"/>
    </location>
</feature>
<feature type="strand" evidence="5">
    <location>
        <begin position="192"/>
        <end position="197"/>
    </location>
</feature>
<feature type="helix" evidence="5">
    <location>
        <begin position="198"/>
        <end position="200"/>
    </location>
</feature>
<feature type="strand" evidence="4">
    <location>
        <begin position="208"/>
        <end position="210"/>
    </location>
</feature>
<feature type="helix" evidence="5">
    <location>
        <begin position="215"/>
        <end position="220"/>
    </location>
</feature>
<feature type="strand" evidence="5">
    <location>
        <begin position="225"/>
        <end position="228"/>
    </location>
</feature>
<feature type="helix" evidence="5">
    <location>
        <begin position="232"/>
        <end position="248"/>
    </location>
</feature>
<feature type="helix" evidence="5">
    <location>
        <begin position="251"/>
        <end position="253"/>
    </location>
</feature>
<protein>
    <recommendedName>
        <fullName>Reaction center protein H chain</fullName>
    </recommendedName>
    <alternativeName>
        <fullName>Photosynthetic reaction center H subunit</fullName>
    </alternativeName>
</protein>
<name>RCEH_BLAVI</name>
<dbReference type="EMBL" id="X02659">
    <property type="protein sequence ID" value="CAA26495.1"/>
    <property type="molecule type" value="Genomic_DNA"/>
</dbReference>
<dbReference type="PIR" id="A22841">
    <property type="entry name" value="A22841"/>
</dbReference>
<dbReference type="RefSeq" id="WP_055036342.1">
    <property type="nucleotide sequence ID" value="NZ_AP014854.2"/>
</dbReference>
<dbReference type="PDB" id="1DXR">
    <property type="method" value="X-ray"/>
    <property type="resolution" value="2.00 A"/>
    <property type="chains" value="H=1-258"/>
</dbReference>
<dbReference type="PDB" id="1PRC">
    <property type="method" value="X-ray"/>
    <property type="resolution" value="2.30 A"/>
    <property type="chains" value="H=1-258"/>
</dbReference>
<dbReference type="PDB" id="1R2C">
    <property type="method" value="X-ray"/>
    <property type="resolution" value="2.86 A"/>
    <property type="chains" value="H=1-258"/>
</dbReference>
<dbReference type="PDB" id="1VRN">
    <property type="method" value="X-ray"/>
    <property type="resolution" value="2.20 A"/>
    <property type="chains" value="H=1-258"/>
</dbReference>
<dbReference type="PDB" id="2I5N">
    <property type="method" value="X-ray"/>
    <property type="resolution" value="1.96 A"/>
    <property type="chains" value="H=1-258"/>
</dbReference>
<dbReference type="PDB" id="2JBL">
    <property type="method" value="X-ray"/>
    <property type="resolution" value="2.40 A"/>
    <property type="chains" value="H=1-258"/>
</dbReference>
<dbReference type="PDB" id="2PRC">
    <property type="method" value="X-ray"/>
    <property type="resolution" value="2.45 A"/>
    <property type="chains" value="H=1-258"/>
</dbReference>
<dbReference type="PDB" id="2WJM">
    <property type="method" value="X-ray"/>
    <property type="resolution" value="1.95 A"/>
    <property type="chains" value="H=1-258"/>
</dbReference>
<dbReference type="PDB" id="2WJN">
    <property type="method" value="X-ray"/>
    <property type="resolution" value="1.86 A"/>
    <property type="chains" value="H=1-258"/>
</dbReference>
<dbReference type="PDB" id="2X5U">
    <property type="method" value="X-ray"/>
    <property type="resolution" value="3.00 A"/>
    <property type="chains" value="H=1-258"/>
</dbReference>
<dbReference type="PDB" id="2X5V">
    <property type="method" value="X-ray"/>
    <property type="resolution" value="3.00 A"/>
    <property type="chains" value="H=1-258"/>
</dbReference>
<dbReference type="PDB" id="3D38">
    <property type="method" value="X-ray"/>
    <property type="resolution" value="3.21 A"/>
    <property type="chains" value="H=1-258"/>
</dbReference>
<dbReference type="PDB" id="3G7F">
    <property type="method" value="X-ray"/>
    <property type="resolution" value="2.50 A"/>
    <property type="chains" value="H=1-258"/>
</dbReference>
<dbReference type="PDB" id="3PRC">
    <property type="method" value="X-ray"/>
    <property type="resolution" value="2.40 A"/>
    <property type="chains" value="H=1-258"/>
</dbReference>
<dbReference type="PDB" id="3T6D">
    <property type="method" value="X-ray"/>
    <property type="resolution" value="1.95 A"/>
    <property type="chains" value="H=1-258"/>
</dbReference>
<dbReference type="PDB" id="3T6E">
    <property type="method" value="X-ray"/>
    <property type="resolution" value="1.92 A"/>
    <property type="chains" value="H=1-258"/>
</dbReference>
<dbReference type="PDB" id="4AC5">
    <property type="method" value="X-ray"/>
    <property type="resolution" value="8.20 A"/>
    <property type="chains" value="H=1-258"/>
</dbReference>
<dbReference type="PDB" id="4CAS">
    <property type="method" value="X-ray"/>
    <property type="resolution" value="3.50 A"/>
    <property type="chains" value="D=1-258"/>
</dbReference>
<dbReference type="PDB" id="5M7J">
    <property type="method" value="X-ray"/>
    <property type="resolution" value="3.50 A"/>
    <property type="chains" value="D=2-258"/>
</dbReference>
<dbReference type="PDB" id="5M7K">
    <property type="method" value="X-ray"/>
    <property type="resolution" value="3.50 A"/>
    <property type="chains" value="D=1-258"/>
</dbReference>
<dbReference type="PDB" id="5M7L">
    <property type="method" value="X-ray"/>
    <property type="resolution" value="3.60 A"/>
    <property type="chains" value="D=1-258"/>
</dbReference>
<dbReference type="PDB" id="5NJ4">
    <property type="method" value="X-ray"/>
    <property type="resolution" value="2.40 A"/>
    <property type="chains" value="H=1-258"/>
</dbReference>
<dbReference type="PDB" id="5O4C">
    <property type="method" value="X-ray"/>
    <property type="resolution" value="2.80 A"/>
    <property type="chains" value="H=1-258"/>
</dbReference>
<dbReference type="PDB" id="5O64">
    <property type="method" value="X-ray"/>
    <property type="resolution" value="3.30 A"/>
    <property type="chains" value="H=2-258"/>
</dbReference>
<dbReference type="PDB" id="5PRC">
    <property type="method" value="X-ray"/>
    <property type="resolution" value="2.35 A"/>
    <property type="chains" value="H=1-258"/>
</dbReference>
<dbReference type="PDB" id="6ET5">
    <property type="method" value="EM"/>
    <property type="resolution" value="3.00 A"/>
    <property type="chains" value="H=1-258"/>
</dbReference>
<dbReference type="PDB" id="6PRC">
    <property type="method" value="X-ray"/>
    <property type="resolution" value="2.30 A"/>
    <property type="chains" value="H=1-258"/>
</dbReference>
<dbReference type="PDB" id="6ZHW">
    <property type="method" value="X-ray"/>
    <property type="resolution" value="2.80 A"/>
    <property type="chains" value="H=1-258"/>
</dbReference>
<dbReference type="PDB" id="6ZI4">
    <property type="method" value="X-ray"/>
    <property type="resolution" value="2.80 A"/>
    <property type="chains" value="H=1-258"/>
</dbReference>
<dbReference type="PDB" id="6ZI5">
    <property type="method" value="X-ray"/>
    <property type="resolution" value="2.80 A"/>
    <property type="chains" value="H=1-258"/>
</dbReference>
<dbReference type="PDB" id="6ZI6">
    <property type="method" value="X-ray"/>
    <property type="resolution" value="2.80 A"/>
    <property type="chains" value="H=1-258"/>
</dbReference>
<dbReference type="PDB" id="6ZI9">
    <property type="method" value="X-ray"/>
    <property type="resolution" value="2.80 A"/>
    <property type="chains" value="H=1-258"/>
</dbReference>
<dbReference type="PDB" id="6ZIA">
    <property type="method" value="X-ray"/>
    <property type="resolution" value="2.80 A"/>
    <property type="chains" value="H=1-258"/>
</dbReference>
<dbReference type="PDB" id="6ZID">
    <property type="method" value="X-ray"/>
    <property type="resolution" value="2.80 A"/>
    <property type="chains" value="H=1-258"/>
</dbReference>
<dbReference type="PDB" id="7PRC">
    <property type="method" value="X-ray"/>
    <property type="resolution" value="2.65 A"/>
    <property type="chains" value="H=1-258"/>
</dbReference>
<dbReference type="PDB" id="7Q7P">
    <property type="method" value="X-ray"/>
    <property type="resolution" value="2.40 A"/>
    <property type="chains" value="HHH=1-258"/>
</dbReference>
<dbReference type="PDB" id="7Q7Q">
    <property type="method" value="X-ray"/>
    <property type="resolution" value="2.25 A"/>
    <property type="chains" value="HHH=1-258"/>
</dbReference>
<dbReference type="PDBsum" id="1DXR"/>
<dbReference type="PDBsum" id="1PRC"/>
<dbReference type="PDBsum" id="1R2C"/>
<dbReference type="PDBsum" id="1VRN"/>
<dbReference type="PDBsum" id="2I5N"/>
<dbReference type="PDBsum" id="2JBL"/>
<dbReference type="PDBsum" id="2PRC"/>
<dbReference type="PDBsum" id="2WJM"/>
<dbReference type="PDBsum" id="2WJN"/>
<dbReference type="PDBsum" id="2X5U"/>
<dbReference type="PDBsum" id="2X5V"/>
<dbReference type="PDBsum" id="3D38"/>
<dbReference type="PDBsum" id="3G7F"/>
<dbReference type="PDBsum" id="3PRC"/>
<dbReference type="PDBsum" id="3T6D"/>
<dbReference type="PDBsum" id="3T6E"/>
<dbReference type="PDBsum" id="4AC5"/>
<dbReference type="PDBsum" id="4CAS"/>
<dbReference type="PDBsum" id="5M7J"/>
<dbReference type="PDBsum" id="5M7K"/>
<dbReference type="PDBsum" id="5M7L"/>
<dbReference type="PDBsum" id="5NJ4"/>
<dbReference type="PDBsum" id="5O4C"/>
<dbReference type="PDBsum" id="5O64"/>
<dbReference type="PDBsum" id="5PRC"/>
<dbReference type="PDBsum" id="6ET5"/>
<dbReference type="PDBsum" id="6PRC"/>
<dbReference type="PDBsum" id="6ZHW"/>
<dbReference type="PDBsum" id="6ZI4"/>
<dbReference type="PDBsum" id="6ZI5"/>
<dbReference type="PDBsum" id="6ZI6"/>
<dbReference type="PDBsum" id="6ZI9"/>
<dbReference type="PDBsum" id="6ZIA"/>
<dbReference type="PDBsum" id="6ZID"/>
<dbReference type="PDBsum" id="7PRC"/>
<dbReference type="PDBsum" id="7Q7P"/>
<dbReference type="PDBsum" id="7Q7Q"/>
<dbReference type="EMDB" id="EMD-3951"/>
<dbReference type="SMR" id="P06008"/>
<dbReference type="IntAct" id="P06008">
    <property type="interactions" value="1"/>
</dbReference>
<dbReference type="STRING" id="1079.BVIR_576"/>
<dbReference type="DrugBank" id="DB07552">
    <property type="generic name" value="(2R)-2-{[4-chloro-6-(ethylamino)-1,3,5-triazin-2-yl]amino}-2-methylbutanenitrile"/>
</dbReference>
<dbReference type="DrugBank" id="DB07551">
    <property type="generic name" value="(2S)-2-{[4-chloro-6-(ethylamino)-1,3,5-triazin-2-yl]amino}-2-methylbutanenitrile"/>
</dbReference>
<dbReference type="DrugBank" id="DB07392">
    <property type="generic name" value="Atrazine"/>
</dbReference>
<dbReference type="DrugBank" id="DB04147">
    <property type="generic name" value="Dodecyldimethylamine N-oxide"/>
</dbReference>
<dbReference type="DrugBank" id="DB04464">
    <property type="generic name" value="N-Formylmethionine"/>
</dbReference>
<dbReference type="DrugBank" id="DB08215">
    <property type="generic name" value="Terbutryn"/>
</dbReference>
<dbReference type="DrugBank" id="DB08689">
    <property type="generic name" value="Ubiquinone Q1"/>
</dbReference>
<dbReference type="DrugBank" id="DB08690">
    <property type="generic name" value="Ubiquinone Q2"/>
</dbReference>
<dbReference type="OrthoDB" id="8557487at2"/>
<dbReference type="EvolutionaryTrace" id="P06008"/>
<dbReference type="GO" id="GO:0030077">
    <property type="term" value="C:plasma membrane light-harvesting complex"/>
    <property type="evidence" value="ECO:0007669"/>
    <property type="project" value="InterPro"/>
</dbReference>
<dbReference type="GO" id="GO:0042717">
    <property type="term" value="C:plasma membrane-derived chromatophore membrane"/>
    <property type="evidence" value="ECO:0007669"/>
    <property type="project" value="UniProtKB-SubCell"/>
</dbReference>
<dbReference type="GO" id="GO:0042314">
    <property type="term" value="F:bacteriochlorophyll binding"/>
    <property type="evidence" value="ECO:0007669"/>
    <property type="project" value="UniProtKB-KW"/>
</dbReference>
<dbReference type="GO" id="GO:0045156">
    <property type="term" value="F:electron transporter, transferring electrons within the cyclic electron transport pathway of photosynthesis activity"/>
    <property type="evidence" value="ECO:0007669"/>
    <property type="project" value="InterPro"/>
</dbReference>
<dbReference type="GO" id="GO:0019684">
    <property type="term" value="P:photosynthesis, light reaction"/>
    <property type="evidence" value="ECO:0007669"/>
    <property type="project" value="InterPro"/>
</dbReference>
<dbReference type="CDD" id="cd00226">
    <property type="entry name" value="PRCH"/>
    <property type="match status" value="1"/>
</dbReference>
<dbReference type="Gene3D" id="3.90.50.10">
    <property type="entry name" value="Photosynthetic Reaction Center, subunit H, domain 2"/>
    <property type="match status" value="1"/>
</dbReference>
<dbReference type="Gene3D" id="4.10.540.10">
    <property type="entry name" value="Photosynthetic reaction centre, H subunit, N-terminal domain"/>
    <property type="match status" value="1"/>
</dbReference>
<dbReference type="InterPro" id="IPR014747">
    <property type="entry name" value="Bac_photo_RC_H_C"/>
</dbReference>
<dbReference type="InterPro" id="IPR005652">
    <property type="entry name" value="Photo_RC_H"/>
</dbReference>
<dbReference type="InterPro" id="IPR015810">
    <property type="entry name" value="Photo_RC_H_N"/>
</dbReference>
<dbReference type="InterPro" id="IPR037097">
    <property type="entry name" value="Photo_RC_H_N_sf"/>
</dbReference>
<dbReference type="InterPro" id="IPR027275">
    <property type="entry name" value="PRC-brl_dom"/>
</dbReference>
<dbReference type="InterPro" id="IPR011033">
    <property type="entry name" value="PRC_barrel-like_sf"/>
</dbReference>
<dbReference type="NCBIfam" id="TIGR01150">
    <property type="entry name" value="puhA"/>
    <property type="match status" value="1"/>
</dbReference>
<dbReference type="Pfam" id="PF05239">
    <property type="entry name" value="PRC"/>
    <property type="match status" value="1"/>
</dbReference>
<dbReference type="Pfam" id="PF03967">
    <property type="entry name" value="PRCH"/>
    <property type="match status" value="1"/>
</dbReference>
<dbReference type="SUPFAM" id="SSF81490">
    <property type="entry name" value="Photosystem II reaction centre subunit H, transmembrane region"/>
    <property type="match status" value="1"/>
</dbReference>
<dbReference type="SUPFAM" id="SSF50346">
    <property type="entry name" value="PRC-barrel domain"/>
    <property type="match status" value="1"/>
</dbReference>
<keyword id="KW-0002">3D-structure</keyword>
<keyword id="KW-0076">Bacteriochlorophyll</keyword>
<keyword id="KW-0148">Chlorophyll</keyword>
<keyword id="KW-0157">Chromophore</keyword>
<keyword id="KW-0249">Electron transport</keyword>
<keyword id="KW-0291">Formylation</keyword>
<keyword id="KW-0472">Membrane</keyword>
<keyword id="KW-0602">Photosynthesis</keyword>
<keyword id="KW-0674">Reaction center</keyword>
<keyword id="KW-0812">Transmembrane</keyword>
<keyword id="KW-1133">Transmembrane helix</keyword>
<keyword id="KW-0813">Transport</keyword>